<feature type="chain" id="PRO_1000195840" description="Protein SlyX">
    <location>
        <begin position="1"/>
        <end position="72"/>
    </location>
</feature>
<feature type="region of interest" description="Disordered" evidence="2">
    <location>
        <begin position="52"/>
        <end position="72"/>
    </location>
</feature>
<feature type="compositionally biased region" description="Polar residues" evidence="2">
    <location>
        <begin position="55"/>
        <end position="65"/>
    </location>
</feature>
<protein>
    <recommendedName>
        <fullName evidence="1">Protein SlyX</fullName>
    </recommendedName>
</protein>
<gene>
    <name evidence="1" type="primary">slyX</name>
    <name type="ordered locus">EFER_3318</name>
</gene>
<evidence type="ECO:0000255" key="1">
    <source>
        <dbReference type="HAMAP-Rule" id="MF_00715"/>
    </source>
</evidence>
<evidence type="ECO:0000256" key="2">
    <source>
        <dbReference type="SAM" id="MobiDB-lite"/>
    </source>
</evidence>
<accession>B7LS54</accession>
<dbReference type="EMBL" id="CU928158">
    <property type="protein sequence ID" value="CAQ90797.1"/>
    <property type="molecule type" value="Genomic_DNA"/>
</dbReference>
<dbReference type="RefSeq" id="WP_001153620.1">
    <property type="nucleotide sequence ID" value="NC_011740.1"/>
</dbReference>
<dbReference type="SMR" id="B7LS54"/>
<dbReference type="KEGG" id="efe:EFER_3318"/>
<dbReference type="HOGENOM" id="CLU_180796_4_2_6"/>
<dbReference type="OrthoDB" id="5771733at2"/>
<dbReference type="Proteomes" id="UP000000745">
    <property type="component" value="Chromosome"/>
</dbReference>
<dbReference type="Gene3D" id="1.20.5.300">
    <property type="match status" value="1"/>
</dbReference>
<dbReference type="HAMAP" id="MF_00715">
    <property type="entry name" value="SlyX"/>
    <property type="match status" value="1"/>
</dbReference>
<dbReference type="InterPro" id="IPR007236">
    <property type="entry name" value="SlyX"/>
</dbReference>
<dbReference type="NCBIfam" id="NF002750">
    <property type="entry name" value="PRK02793.1"/>
    <property type="match status" value="1"/>
</dbReference>
<dbReference type="PANTHER" id="PTHR36508">
    <property type="entry name" value="PROTEIN SLYX"/>
    <property type="match status" value="1"/>
</dbReference>
<dbReference type="PANTHER" id="PTHR36508:SF1">
    <property type="entry name" value="PROTEIN SLYX"/>
    <property type="match status" value="1"/>
</dbReference>
<dbReference type="Pfam" id="PF04102">
    <property type="entry name" value="SlyX"/>
    <property type="match status" value="1"/>
</dbReference>
<comment type="similarity">
    <text evidence="1">Belongs to the SlyX family.</text>
</comment>
<sequence length="72" mass="8232">MQDLSMEARLAELESRLAFQEITIEELNVTVTAHEMEMAKLRDHLRLLTEKLKASQPSNIASQAEETPPPHY</sequence>
<name>SLYX_ESCF3</name>
<reference key="1">
    <citation type="journal article" date="2009" name="PLoS Genet.">
        <title>Organised genome dynamics in the Escherichia coli species results in highly diverse adaptive paths.</title>
        <authorList>
            <person name="Touchon M."/>
            <person name="Hoede C."/>
            <person name="Tenaillon O."/>
            <person name="Barbe V."/>
            <person name="Baeriswyl S."/>
            <person name="Bidet P."/>
            <person name="Bingen E."/>
            <person name="Bonacorsi S."/>
            <person name="Bouchier C."/>
            <person name="Bouvet O."/>
            <person name="Calteau A."/>
            <person name="Chiapello H."/>
            <person name="Clermont O."/>
            <person name="Cruveiller S."/>
            <person name="Danchin A."/>
            <person name="Diard M."/>
            <person name="Dossat C."/>
            <person name="Karoui M.E."/>
            <person name="Frapy E."/>
            <person name="Garry L."/>
            <person name="Ghigo J.M."/>
            <person name="Gilles A.M."/>
            <person name="Johnson J."/>
            <person name="Le Bouguenec C."/>
            <person name="Lescat M."/>
            <person name="Mangenot S."/>
            <person name="Martinez-Jehanne V."/>
            <person name="Matic I."/>
            <person name="Nassif X."/>
            <person name="Oztas S."/>
            <person name="Petit M.A."/>
            <person name="Pichon C."/>
            <person name="Rouy Z."/>
            <person name="Ruf C.S."/>
            <person name="Schneider D."/>
            <person name="Tourret J."/>
            <person name="Vacherie B."/>
            <person name="Vallenet D."/>
            <person name="Medigue C."/>
            <person name="Rocha E.P.C."/>
            <person name="Denamur E."/>
        </authorList>
    </citation>
    <scope>NUCLEOTIDE SEQUENCE [LARGE SCALE GENOMIC DNA]</scope>
    <source>
        <strain>ATCC 35469 / DSM 13698 / BCRC 15582 / CCUG 18766 / IAM 14443 / JCM 21226 / LMG 7866 / NBRC 102419 / NCTC 12128 / CDC 0568-73</strain>
    </source>
</reference>
<organism>
    <name type="scientific">Escherichia fergusonii (strain ATCC 35469 / DSM 13698 / CCUG 18766 / IAM 14443 / JCM 21226 / LMG 7866 / NBRC 102419 / NCTC 12128 / CDC 0568-73)</name>
    <dbReference type="NCBI Taxonomy" id="585054"/>
    <lineage>
        <taxon>Bacteria</taxon>
        <taxon>Pseudomonadati</taxon>
        <taxon>Pseudomonadota</taxon>
        <taxon>Gammaproteobacteria</taxon>
        <taxon>Enterobacterales</taxon>
        <taxon>Enterobacteriaceae</taxon>
        <taxon>Escherichia</taxon>
    </lineage>
</organism>
<proteinExistence type="inferred from homology"/>